<organism>
    <name type="scientific">Candida glabrata (strain ATCC 2001 / BCRC 20586 / JCM 3761 / NBRC 0622 / NRRL Y-65 / CBS 138)</name>
    <name type="common">Yeast</name>
    <name type="synonym">Nakaseomyces glabratus</name>
    <dbReference type="NCBI Taxonomy" id="284593"/>
    <lineage>
        <taxon>Eukaryota</taxon>
        <taxon>Fungi</taxon>
        <taxon>Dikarya</taxon>
        <taxon>Ascomycota</taxon>
        <taxon>Saccharomycotina</taxon>
        <taxon>Saccharomycetes</taxon>
        <taxon>Saccharomycetales</taxon>
        <taxon>Saccharomycetaceae</taxon>
        <taxon>Nakaseomyces</taxon>
    </lineage>
</organism>
<gene>
    <name type="primary">NMA111</name>
    <name type="ordered locus">CAGL0L04092g</name>
</gene>
<name>NM111_CANGA</name>
<dbReference type="EC" id="3.4.21.-"/>
<dbReference type="EMBL" id="CR380958">
    <property type="protein sequence ID" value="CAG61922.1"/>
    <property type="molecule type" value="Genomic_DNA"/>
</dbReference>
<dbReference type="RefSeq" id="XP_448952.1">
    <property type="nucleotide sequence ID" value="XM_448952.1"/>
</dbReference>
<dbReference type="SMR" id="Q6FLE2"/>
<dbReference type="FunCoup" id="Q6FLE2">
    <property type="interactions" value="149"/>
</dbReference>
<dbReference type="STRING" id="284593.Q6FLE2"/>
<dbReference type="EnsemblFungi" id="CAGL0L04092g-T">
    <property type="protein sequence ID" value="CAGL0L04092g-T-p1"/>
    <property type="gene ID" value="CAGL0L04092g"/>
</dbReference>
<dbReference type="KEGG" id="cgr:2890766"/>
<dbReference type="CGD" id="CAL0135960">
    <property type="gene designation" value="CAGL0L04092g"/>
</dbReference>
<dbReference type="VEuPathDB" id="FungiDB:CAGL0L04092g"/>
<dbReference type="eggNOG" id="KOG1421">
    <property type="taxonomic scope" value="Eukaryota"/>
</dbReference>
<dbReference type="HOGENOM" id="CLU_003212_0_0_1"/>
<dbReference type="InParanoid" id="Q6FLE2"/>
<dbReference type="OMA" id="FWGHCVF"/>
<dbReference type="Proteomes" id="UP000002428">
    <property type="component" value="Chromosome L"/>
</dbReference>
<dbReference type="GO" id="GO:0005634">
    <property type="term" value="C:nucleus"/>
    <property type="evidence" value="ECO:0007669"/>
    <property type="project" value="UniProtKB-SubCell"/>
</dbReference>
<dbReference type="GO" id="GO:0004252">
    <property type="term" value="F:serine-type endopeptidase activity"/>
    <property type="evidence" value="ECO:0007669"/>
    <property type="project" value="EnsemblFungi"/>
</dbReference>
<dbReference type="GO" id="GO:0006915">
    <property type="term" value="P:apoptotic process"/>
    <property type="evidence" value="ECO:0007669"/>
    <property type="project" value="UniProtKB-KW"/>
</dbReference>
<dbReference type="GO" id="GO:0034605">
    <property type="term" value="P:cellular response to heat"/>
    <property type="evidence" value="ECO:0007669"/>
    <property type="project" value="EnsemblFungi"/>
</dbReference>
<dbReference type="GO" id="GO:0006629">
    <property type="term" value="P:lipid metabolic process"/>
    <property type="evidence" value="ECO:0007669"/>
    <property type="project" value="EnsemblFungi"/>
</dbReference>
<dbReference type="GO" id="GO:0120174">
    <property type="term" value="P:stress-induced homeostatically regulated protein degradation pathway"/>
    <property type="evidence" value="ECO:0007669"/>
    <property type="project" value="EnsemblFungi"/>
</dbReference>
<dbReference type="CDD" id="cd06786">
    <property type="entry name" value="cpPDZ1_ScNma111-like"/>
    <property type="match status" value="1"/>
</dbReference>
<dbReference type="CDD" id="cd10827">
    <property type="entry name" value="cpPDZ3_ScNma111-like"/>
    <property type="match status" value="1"/>
</dbReference>
<dbReference type="CDD" id="cd06719">
    <property type="entry name" value="PDZ2-4_Nma111p-like"/>
    <property type="match status" value="2"/>
</dbReference>
<dbReference type="FunFam" id="2.40.10.120:FF:000013">
    <property type="entry name" value="Pro-apoptotic serine protease NMA111"/>
    <property type="match status" value="1"/>
</dbReference>
<dbReference type="Gene3D" id="2.30.42.10">
    <property type="match status" value="2"/>
</dbReference>
<dbReference type="Gene3D" id="2.40.10.120">
    <property type="match status" value="2"/>
</dbReference>
<dbReference type="InterPro" id="IPR001478">
    <property type="entry name" value="PDZ"/>
</dbReference>
<dbReference type="InterPro" id="IPR025926">
    <property type="entry name" value="PDZ-like_dom"/>
</dbReference>
<dbReference type="InterPro" id="IPR041489">
    <property type="entry name" value="PDZ_6"/>
</dbReference>
<dbReference type="InterPro" id="IPR036034">
    <property type="entry name" value="PDZ_sf"/>
</dbReference>
<dbReference type="InterPro" id="IPR009003">
    <property type="entry name" value="Peptidase_S1_PA"/>
</dbReference>
<dbReference type="InterPro" id="IPR001940">
    <property type="entry name" value="Peptidase_S1C"/>
</dbReference>
<dbReference type="PANTHER" id="PTHR46366">
    <property type="entry name" value="PRO-APOPTOTIC SERINE PROTEASE NMA111"/>
    <property type="match status" value="1"/>
</dbReference>
<dbReference type="PANTHER" id="PTHR46366:SF8">
    <property type="entry name" value="PRO-APOPTOTIC SERINE PROTEASE NMA111"/>
    <property type="match status" value="1"/>
</dbReference>
<dbReference type="Pfam" id="PF12812">
    <property type="entry name" value="PDZ_1"/>
    <property type="match status" value="2"/>
</dbReference>
<dbReference type="Pfam" id="PF17820">
    <property type="entry name" value="PDZ_6"/>
    <property type="match status" value="1"/>
</dbReference>
<dbReference type="Pfam" id="PF13365">
    <property type="entry name" value="Trypsin_2"/>
    <property type="match status" value="1"/>
</dbReference>
<dbReference type="PRINTS" id="PR00834">
    <property type="entry name" value="PROTEASES2C"/>
</dbReference>
<dbReference type="SMART" id="SM00228">
    <property type="entry name" value="PDZ"/>
    <property type="match status" value="2"/>
</dbReference>
<dbReference type="SUPFAM" id="SSF50156">
    <property type="entry name" value="PDZ domain-like"/>
    <property type="match status" value="3"/>
</dbReference>
<dbReference type="SUPFAM" id="SSF50494">
    <property type="entry name" value="Trypsin-like serine proteases"/>
    <property type="match status" value="2"/>
</dbReference>
<comment type="function">
    <text evidence="1">Nuclear serine protease which mediates apoptosis.</text>
</comment>
<comment type="subcellular location">
    <subcellularLocation>
        <location evidence="1">Nucleus</location>
    </subcellularLocation>
</comment>
<comment type="similarity">
    <text evidence="4">Belongs to the peptidase S1C family.</text>
</comment>
<keyword id="KW-0053">Apoptosis</keyword>
<keyword id="KW-0378">Hydrolase</keyword>
<keyword id="KW-0539">Nucleus</keyword>
<keyword id="KW-0645">Protease</keyword>
<keyword id="KW-1185">Reference proteome</keyword>
<keyword id="KW-0677">Repeat</keyword>
<keyword id="KW-0720">Serine protease</keyword>
<proteinExistence type="inferred from homology"/>
<reference key="1">
    <citation type="journal article" date="2004" name="Nature">
        <title>Genome evolution in yeasts.</title>
        <authorList>
            <person name="Dujon B."/>
            <person name="Sherman D."/>
            <person name="Fischer G."/>
            <person name="Durrens P."/>
            <person name="Casaregola S."/>
            <person name="Lafontaine I."/>
            <person name="de Montigny J."/>
            <person name="Marck C."/>
            <person name="Neuveglise C."/>
            <person name="Talla E."/>
            <person name="Goffard N."/>
            <person name="Frangeul L."/>
            <person name="Aigle M."/>
            <person name="Anthouard V."/>
            <person name="Babour A."/>
            <person name="Barbe V."/>
            <person name="Barnay S."/>
            <person name="Blanchin S."/>
            <person name="Beckerich J.-M."/>
            <person name="Beyne E."/>
            <person name="Bleykasten C."/>
            <person name="Boisrame A."/>
            <person name="Boyer J."/>
            <person name="Cattolico L."/>
            <person name="Confanioleri F."/>
            <person name="de Daruvar A."/>
            <person name="Despons L."/>
            <person name="Fabre E."/>
            <person name="Fairhead C."/>
            <person name="Ferry-Dumazet H."/>
            <person name="Groppi A."/>
            <person name="Hantraye F."/>
            <person name="Hennequin C."/>
            <person name="Jauniaux N."/>
            <person name="Joyet P."/>
            <person name="Kachouri R."/>
            <person name="Kerrest A."/>
            <person name="Koszul R."/>
            <person name="Lemaire M."/>
            <person name="Lesur I."/>
            <person name="Ma L."/>
            <person name="Muller H."/>
            <person name="Nicaud J.-M."/>
            <person name="Nikolski M."/>
            <person name="Oztas S."/>
            <person name="Ozier-Kalogeropoulos O."/>
            <person name="Pellenz S."/>
            <person name="Potier S."/>
            <person name="Richard G.-F."/>
            <person name="Straub M.-L."/>
            <person name="Suleau A."/>
            <person name="Swennen D."/>
            <person name="Tekaia F."/>
            <person name="Wesolowski-Louvel M."/>
            <person name="Westhof E."/>
            <person name="Wirth B."/>
            <person name="Zeniou-Meyer M."/>
            <person name="Zivanovic Y."/>
            <person name="Bolotin-Fukuhara M."/>
            <person name="Thierry A."/>
            <person name="Bouchier C."/>
            <person name="Caudron B."/>
            <person name="Scarpelli C."/>
            <person name="Gaillardin C."/>
            <person name="Weissenbach J."/>
            <person name="Wincker P."/>
            <person name="Souciet J.-L."/>
        </authorList>
    </citation>
    <scope>NUCLEOTIDE SEQUENCE [LARGE SCALE GENOMIC DNA]</scope>
    <source>
        <strain>ATCC 2001 / BCRC 20586 / JCM 3761 / NBRC 0622 / NRRL Y-65 / CBS 138</strain>
    </source>
</reference>
<sequence length="979" mass="109126">MTIMNEGKKRSHSSSSDDHLAKRQYVEHGNECIMADEDIDTAIFEDGIKNNMQWQDTISKVVKAVVSIHFAQVAPFDCDPALVSEATGFVVDSELGIILTNRHVVGAGPFVGYVVFDNHEECDVIPIYRDPVHDFGFLKFDPKKIKYTKIHALELKPSLAKVGSEIRVVGNDAGEKLSILAGFISRIDRNAPDYGELTYNDFNTEYIQAAASASGGSSGSPVVNVDGYAVALQAGGSTEASTDFFLPLDRILRALKCIQADQPITRGTIQTQWLLKPYDECKRLGLTPEHESTSRALFPDRIGLLVAETILREGPSDGKIKEGDILIAINGQRISTFIQVDDILDSNVGNNVEFTVQRGGTDINVTCTIGDLHAITPSKYVEVCGATFNELSYQMARFYALPIRGVFLSSASGSFNFDNKEKIGWIVDSVNYQDTPNLDAFVEVMKTIPDKSRVTVRYHHLTDQHSPNVTSIYIDRHWCSEFRIYERNDKTGIWDYTNVADPISEEPLKPHTAKFIPIPSTNPEIAKLSSSLCMVHTVAAIPIDSLSAETLKTSGLIIDAEQGYVIVSRRAVPHDCLDVFVTIADSIVIPATIEFLHPMQNYAIVKYDPNLVKAPVVTPKLSNRRMKRGESAQFIGYTHNNRLITSETSVTDISSVSIPSNLIPRYRATNLEAISIDSNISPRCNFGIMTDQDGTVRALWLSFLGERQENKEKVYLMGLDIMDCKNVINILKSGKKPQVHIIDAGFGSISILHARIRGVPEEWIQKMEAESNNRLQFITVSRVSYTEETVKLQTGDVILSVNDKLVTEMDQLSGIVHASDENIDSHVLHFKVVRDGKIVDLDMKTVQVDETDQIVIFAGCILQKPHHAVRQAMSDIPKGVYCTFRGESSPAIQYGISATNFITHVNEIPTPDLDKFLEVVRQIPDNTYCKIRMMTFDNVPFAISLKTNYHYFPTAELKKNKDTGKWIEKEYNNSQEIPK</sequence>
<evidence type="ECO:0000250" key="1"/>
<evidence type="ECO:0000255" key="2"/>
<evidence type="ECO:0000256" key="3">
    <source>
        <dbReference type="SAM" id="MobiDB-lite"/>
    </source>
</evidence>
<evidence type="ECO:0000305" key="4"/>
<protein>
    <recommendedName>
        <fullName>Pro-apoptotic serine protease NMA111</fullName>
        <ecNumber>3.4.21.-</ecNumber>
    </recommendedName>
</protein>
<accession>Q6FLE2</accession>
<feature type="chain" id="PRO_0000320349" description="Pro-apoptotic serine protease NMA111">
    <location>
        <begin position="1"/>
        <end position="979"/>
    </location>
</feature>
<feature type="domain" description="PDZ 1">
    <location>
        <begin position="273"/>
        <end position="361"/>
    </location>
</feature>
<feature type="domain" description="PDZ 2">
    <location>
        <begin position="750"/>
        <end position="836"/>
    </location>
</feature>
<feature type="region of interest" description="Disordered" evidence="3">
    <location>
        <begin position="1"/>
        <end position="20"/>
    </location>
</feature>
<feature type="region of interest" description="Serine protease">
    <location>
        <begin position="65"/>
        <end position="255"/>
    </location>
</feature>
<feature type="active site" description="Charge relay system" evidence="2">
    <location>
        <position position="103"/>
    </location>
</feature>
<feature type="active site" description="Charge relay system" evidence="2">
    <location>
        <position position="134"/>
    </location>
</feature>
<feature type="active site" description="Charge relay system" evidence="2">
    <location>
        <position position="217"/>
    </location>
</feature>